<name>PNP_PARD8</name>
<gene>
    <name evidence="1" type="primary">pnp</name>
    <name type="ordered locus">BDI_2760</name>
</gene>
<proteinExistence type="inferred from homology"/>
<feature type="chain" id="PRO_0000329747" description="Polyribonucleotide nucleotidyltransferase">
    <location>
        <begin position="1"/>
        <end position="746"/>
    </location>
</feature>
<feature type="domain" description="KH" evidence="1">
    <location>
        <begin position="557"/>
        <end position="619"/>
    </location>
</feature>
<feature type="domain" description="S1 motif" evidence="1">
    <location>
        <begin position="629"/>
        <end position="699"/>
    </location>
</feature>
<feature type="region of interest" description="Disordered" evidence="2">
    <location>
        <begin position="701"/>
        <end position="746"/>
    </location>
</feature>
<feature type="compositionally biased region" description="Basic and acidic residues" evidence="2">
    <location>
        <begin position="706"/>
        <end position="746"/>
    </location>
</feature>
<feature type="binding site" evidence="1">
    <location>
        <position position="490"/>
    </location>
    <ligand>
        <name>Mg(2+)</name>
        <dbReference type="ChEBI" id="CHEBI:18420"/>
    </ligand>
</feature>
<feature type="binding site" evidence="1">
    <location>
        <position position="496"/>
    </location>
    <ligand>
        <name>Mg(2+)</name>
        <dbReference type="ChEBI" id="CHEBI:18420"/>
    </ligand>
</feature>
<reference key="1">
    <citation type="journal article" date="2007" name="PLoS Biol.">
        <title>Evolution of symbiotic bacteria in the distal human intestine.</title>
        <authorList>
            <person name="Xu J."/>
            <person name="Mahowald M.A."/>
            <person name="Ley R.E."/>
            <person name="Lozupone C.A."/>
            <person name="Hamady M."/>
            <person name="Martens E.C."/>
            <person name="Henrissat B."/>
            <person name="Coutinho P.M."/>
            <person name="Minx P."/>
            <person name="Latreille P."/>
            <person name="Cordum H."/>
            <person name="Van Brunt A."/>
            <person name="Kim K."/>
            <person name="Fulton R.S."/>
            <person name="Fulton L.A."/>
            <person name="Clifton S.W."/>
            <person name="Wilson R.K."/>
            <person name="Knight R.D."/>
            <person name="Gordon J.I."/>
        </authorList>
    </citation>
    <scope>NUCLEOTIDE SEQUENCE [LARGE SCALE GENOMIC DNA]</scope>
    <source>
        <strain>ATCC 8503 / DSM 20701 / CIP 104284 / JCM 5825 / NCTC 11152</strain>
    </source>
</reference>
<keyword id="KW-0963">Cytoplasm</keyword>
<keyword id="KW-0460">Magnesium</keyword>
<keyword id="KW-0479">Metal-binding</keyword>
<keyword id="KW-0548">Nucleotidyltransferase</keyword>
<keyword id="KW-1185">Reference proteome</keyword>
<keyword id="KW-0694">RNA-binding</keyword>
<keyword id="KW-0808">Transferase</keyword>
<sequence length="746" mass="82019">MLNPINKTIELGDGRTITIETGKLAKQADGAVTVRMNNTVLLATVCAAKDANPGVDFMPLQVEYKEKYSAFGRFPGGFTKREGKASDYEILTSRLVDRALRPLFPDNYHAEVYVNIILFSADGEDLPDALAGLAASAALAVSDIPFNGPISEVRVARTDGKYIVNPTSAELEKADIDIMVAATIDNIMMVEGEMNEVQESEMLEAIKVAHEAIKVQCKAQLELSEACGKLVKREYCHEVNDDELRKDVHDKCYAKAYAVATSGSGKHERSEAFEKIVEEYKAQFSEEELTDEKLEMIGRYYHDVEKEAMRRAILDEGKRLDGRKTTEIRPIWIETDCLPGPHGSAIFTRGETQSLSTVTLGTKSDEKMIDDVLNHGYERFLLHYNFPPFSTGEAKATRGVGRREIGHGNLAHRALKRMIPDNYPYVVRVISDILESNGSSSMATVCAGTLALRDAGVPMKKPVSGIAMGLISENKGTNYAILSDILGDEDHLGDMDFKVTGTKDGITATQMDIKVDGLSYEILENALAQAKEGRMHILGKILEAQPEAREDLKPHAPRIETMIIGKEFIGAVIGPGGKIIQGIQEKTGATVSIDEVDGVGKIEISGTNKATIDAAVKAIKAIVAVPEIGEVYEGKISSIMPYGAFVEFMPGKDGLLHISEIDWKRLETVEQAGLKEGDTVSVKLVDIDPKTGKFKLSRKVLLPKPEGYEERPPRPERGERGPRQDRGDRGPRQDRGDRGPRREYRD</sequence>
<evidence type="ECO:0000255" key="1">
    <source>
        <dbReference type="HAMAP-Rule" id="MF_01595"/>
    </source>
</evidence>
<evidence type="ECO:0000256" key="2">
    <source>
        <dbReference type="SAM" id="MobiDB-lite"/>
    </source>
</evidence>
<comment type="function">
    <text evidence="1">Involved in mRNA degradation. Catalyzes the phosphorolysis of single-stranded polyribonucleotides processively in the 3'- to 5'-direction.</text>
</comment>
<comment type="catalytic activity">
    <reaction evidence="1">
        <text>RNA(n+1) + phosphate = RNA(n) + a ribonucleoside 5'-diphosphate</text>
        <dbReference type="Rhea" id="RHEA:22096"/>
        <dbReference type="Rhea" id="RHEA-COMP:14527"/>
        <dbReference type="Rhea" id="RHEA-COMP:17342"/>
        <dbReference type="ChEBI" id="CHEBI:43474"/>
        <dbReference type="ChEBI" id="CHEBI:57930"/>
        <dbReference type="ChEBI" id="CHEBI:140395"/>
        <dbReference type="EC" id="2.7.7.8"/>
    </reaction>
</comment>
<comment type="cofactor">
    <cofactor evidence="1">
        <name>Mg(2+)</name>
        <dbReference type="ChEBI" id="CHEBI:18420"/>
    </cofactor>
</comment>
<comment type="subcellular location">
    <subcellularLocation>
        <location evidence="1">Cytoplasm</location>
    </subcellularLocation>
</comment>
<comment type="similarity">
    <text evidence="1">Belongs to the polyribonucleotide nucleotidyltransferase family.</text>
</comment>
<dbReference type="EC" id="2.7.7.8" evidence="1"/>
<dbReference type="EMBL" id="CP000140">
    <property type="protein sequence ID" value="ABR44473.1"/>
    <property type="molecule type" value="Genomic_DNA"/>
</dbReference>
<dbReference type="RefSeq" id="WP_005860818.1">
    <property type="nucleotide sequence ID" value="NC_009615.1"/>
</dbReference>
<dbReference type="SMR" id="A6LFK9"/>
<dbReference type="STRING" id="435591.BDI_2760"/>
<dbReference type="PaxDb" id="435591-BDI_2760"/>
<dbReference type="KEGG" id="pdi:BDI_2760"/>
<dbReference type="eggNOG" id="COG1185">
    <property type="taxonomic scope" value="Bacteria"/>
</dbReference>
<dbReference type="HOGENOM" id="CLU_004217_2_2_10"/>
<dbReference type="BioCyc" id="PDIS435591:G1G5A-2836-MONOMER"/>
<dbReference type="Proteomes" id="UP000000566">
    <property type="component" value="Chromosome"/>
</dbReference>
<dbReference type="GO" id="GO:0005829">
    <property type="term" value="C:cytosol"/>
    <property type="evidence" value="ECO:0007669"/>
    <property type="project" value="TreeGrafter"/>
</dbReference>
<dbReference type="GO" id="GO:0000175">
    <property type="term" value="F:3'-5'-RNA exonuclease activity"/>
    <property type="evidence" value="ECO:0007669"/>
    <property type="project" value="TreeGrafter"/>
</dbReference>
<dbReference type="GO" id="GO:0000287">
    <property type="term" value="F:magnesium ion binding"/>
    <property type="evidence" value="ECO:0007669"/>
    <property type="project" value="UniProtKB-UniRule"/>
</dbReference>
<dbReference type="GO" id="GO:0004654">
    <property type="term" value="F:polyribonucleotide nucleotidyltransferase activity"/>
    <property type="evidence" value="ECO:0007669"/>
    <property type="project" value="UniProtKB-UniRule"/>
</dbReference>
<dbReference type="GO" id="GO:0003723">
    <property type="term" value="F:RNA binding"/>
    <property type="evidence" value="ECO:0007669"/>
    <property type="project" value="UniProtKB-UniRule"/>
</dbReference>
<dbReference type="GO" id="GO:0006402">
    <property type="term" value="P:mRNA catabolic process"/>
    <property type="evidence" value="ECO:0007669"/>
    <property type="project" value="UniProtKB-UniRule"/>
</dbReference>
<dbReference type="GO" id="GO:0006396">
    <property type="term" value="P:RNA processing"/>
    <property type="evidence" value="ECO:0007669"/>
    <property type="project" value="InterPro"/>
</dbReference>
<dbReference type="CDD" id="cd02393">
    <property type="entry name" value="KH-I_PNPase"/>
    <property type="match status" value="1"/>
</dbReference>
<dbReference type="CDD" id="cd11363">
    <property type="entry name" value="RNase_PH_PNPase_1"/>
    <property type="match status" value="1"/>
</dbReference>
<dbReference type="CDD" id="cd11364">
    <property type="entry name" value="RNase_PH_PNPase_2"/>
    <property type="match status" value="1"/>
</dbReference>
<dbReference type="CDD" id="cd04472">
    <property type="entry name" value="S1_PNPase"/>
    <property type="match status" value="1"/>
</dbReference>
<dbReference type="FunFam" id="2.40.50.140:FF:000178">
    <property type="entry name" value="Polyribonucleotide nucleotidyltransferase"/>
    <property type="match status" value="1"/>
</dbReference>
<dbReference type="FunFam" id="3.30.1370.10:FF:000001">
    <property type="entry name" value="Polyribonucleotide nucleotidyltransferase"/>
    <property type="match status" value="1"/>
</dbReference>
<dbReference type="FunFam" id="3.30.230.70:FF:000001">
    <property type="entry name" value="Polyribonucleotide nucleotidyltransferase"/>
    <property type="match status" value="1"/>
</dbReference>
<dbReference type="FunFam" id="3.30.230.70:FF:000002">
    <property type="entry name" value="Polyribonucleotide nucleotidyltransferase"/>
    <property type="match status" value="1"/>
</dbReference>
<dbReference type="Gene3D" id="3.30.230.70">
    <property type="entry name" value="GHMP Kinase, N-terminal domain"/>
    <property type="match status" value="2"/>
</dbReference>
<dbReference type="Gene3D" id="3.30.1370.10">
    <property type="entry name" value="K Homology domain, type 1"/>
    <property type="match status" value="1"/>
</dbReference>
<dbReference type="Gene3D" id="2.40.50.140">
    <property type="entry name" value="Nucleic acid-binding proteins"/>
    <property type="match status" value="1"/>
</dbReference>
<dbReference type="HAMAP" id="MF_01595">
    <property type="entry name" value="PNPase"/>
    <property type="match status" value="1"/>
</dbReference>
<dbReference type="InterPro" id="IPR001247">
    <property type="entry name" value="ExoRNase_PH_dom1"/>
</dbReference>
<dbReference type="InterPro" id="IPR015847">
    <property type="entry name" value="ExoRNase_PH_dom2"/>
</dbReference>
<dbReference type="InterPro" id="IPR036345">
    <property type="entry name" value="ExoRNase_PH_dom2_sf"/>
</dbReference>
<dbReference type="InterPro" id="IPR004087">
    <property type="entry name" value="KH_dom"/>
</dbReference>
<dbReference type="InterPro" id="IPR004088">
    <property type="entry name" value="KH_dom_type_1"/>
</dbReference>
<dbReference type="InterPro" id="IPR036612">
    <property type="entry name" value="KH_dom_type_1_sf"/>
</dbReference>
<dbReference type="InterPro" id="IPR012340">
    <property type="entry name" value="NA-bd_OB-fold"/>
</dbReference>
<dbReference type="InterPro" id="IPR012162">
    <property type="entry name" value="PNPase"/>
</dbReference>
<dbReference type="InterPro" id="IPR027408">
    <property type="entry name" value="PNPase/RNase_PH_dom_sf"/>
</dbReference>
<dbReference type="InterPro" id="IPR015848">
    <property type="entry name" value="PNPase_PH_RNA-bd_bac/org-type"/>
</dbReference>
<dbReference type="InterPro" id="IPR020568">
    <property type="entry name" value="Ribosomal_Su5_D2-typ_SF"/>
</dbReference>
<dbReference type="InterPro" id="IPR003029">
    <property type="entry name" value="S1_domain"/>
</dbReference>
<dbReference type="NCBIfam" id="TIGR03591">
    <property type="entry name" value="polynuc_phos"/>
    <property type="match status" value="1"/>
</dbReference>
<dbReference type="NCBIfam" id="NF008805">
    <property type="entry name" value="PRK11824.1"/>
    <property type="match status" value="1"/>
</dbReference>
<dbReference type="PANTHER" id="PTHR11252">
    <property type="entry name" value="POLYRIBONUCLEOTIDE NUCLEOTIDYLTRANSFERASE"/>
    <property type="match status" value="1"/>
</dbReference>
<dbReference type="PANTHER" id="PTHR11252:SF0">
    <property type="entry name" value="POLYRIBONUCLEOTIDE NUCLEOTIDYLTRANSFERASE 1, MITOCHONDRIAL"/>
    <property type="match status" value="1"/>
</dbReference>
<dbReference type="Pfam" id="PF00013">
    <property type="entry name" value="KH_1"/>
    <property type="match status" value="1"/>
</dbReference>
<dbReference type="Pfam" id="PF03726">
    <property type="entry name" value="PNPase"/>
    <property type="match status" value="1"/>
</dbReference>
<dbReference type="Pfam" id="PF01138">
    <property type="entry name" value="RNase_PH"/>
    <property type="match status" value="2"/>
</dbReference>
<dbReference type="Pfam" id="PF03725">
    <property type="entry name" value="RNase_PH_C"/>
    <property type="match status" value="2"/>
</dbReference>
<dbReference type="Pfam" id="PF00575">
    <property type="entry name" value="S1"/>
    <property type="match status" value="1"/>
</dbReference>
<dbReference type="PIRSF" id="PIRSF005499">
    <property type="entry name" value="PNPase"/>
    <property type="match status" value="1"/>
</dbReference>
<dbReference type="SMART" id="SM00322">
    <property type="entry name" value="KH"/>
    <property type="match status" value="1"/>
</dbReference>
<dbReference type="SMART" id="SM00316">
    <property type="entry name" value="S1"/>
    <property type="match status" value="1"/>
</dbReference>
<dbReference type="SUPFAM" id="SSF54791">
    <property type="entry name" value="Eukaryotic type KH-domain (KH-domain type I)"/>
    <property type="match status" value="1"/>
</dbReference>
<dbReference type="SUPFAM" id="SSF50249">
    <property type="entry name" value="Nucleic acid-binding proteins"/>
    <property type="match status" value="1"/>
</dbReference>
<dbReference type="SUPFAM" id="SSF55666">
    <property type="entry name" value="Ribonuclease PH domain 2-like"/>
    <property type="match status" value="2"/>
</dbReference>
<dbReference type="SUPFAM" id="SSF54211">
    <property type="entry name" value="Ribosomal protein S5 domain 2-like"/>
    <property type="match status" value="2"/>
</dbReference>
<dbReference type="PROSITE" id="PS50084">
    <property type="entry name" value="KH_TYPE_1"/>
    <property type="match status" value="1"/>
</dbReference>
<dbReference type="PROSITE" id="PS50126">
    <property type="entry name" value="S1"/>
    <property type="match status" value="1"/>
</dbReference>
<protein>
    <recommendedName>
        <fullName evidence="1">Polyribonucleotide nucleotidyltransferase</fullName>
        <ecNumber evidence="1">2.7.7.8</ecNumber>
    </recommendedName>
    <alternativeName>
        <fullName evidence="1">Polynucleotide phosphorylase</fullName>
        <shortName evidence="1">PNPase</shortName>
    </alternativeName>
</protein>
<organism>
    <name type="scientific">Parabacteroides distasonis (strain ATCC 8503 / DSM 20701 / CIP 104284 / JCM 5825 / NCTC 11152)</name>
    <dbReference type="NCBI Taxonomy" id="435591"/>
    <lineage>
        <taxon>Bacteria</taxon>
        <taxon>Pseudomonadati</taxon>
        <taxon>Bacteroidota</taxon>
        <taxon>Bacteroidia</taxon>
        <taxon>Bacteroidales</taxon>
        <taxon>Tannerellaceae</taxon>
        <taxon>Parabacteroides</taxon>
    </lineage>
</organism>
<accession>A6LFK9</accession>